<sequence>MEGGGGGLGGEPGLLQQILSLRLVPRVGNVTDCQRATLCSFPEMWYGVFLWALVSSLFFHIPAGLLALFTLRHHKYGRFMSVGIFLMGVLGPISAGILTSAAIAGVYKAAGKEMIPFEALVLGVGQTFCVLIVSFLRILATL</sequence>
<gene>
    <name type="primary">tmem170a</name>
    <name type="synonym">tmem170</name>
</gene>
<accession>Q6DF87</accession>
<reference key="1">
    <citation type="submission" date="2004-07" db="EMBL/GenBank/DDBJ databases">
        <authorList>
            <consortium name="NIH - Xenopus Gene Collection (XGC) project"/>
        </authorList>
    </citation>
    <scope>NUCLEOTIDE SEQUENCE [LARGE SCALE MRNA]</scope>
    <source>
        <tissue>Oocyte</tissue>
    </source>
</reference>
<dbReference type="EMBL" id="BC076855">
    <property type="protein sequence ID" value="AAH76855.1"/>
    <property type="molecule type" value="mRNA"/>
</dbReference>
<dbReference type="RefSeq" id="NP_001086596.1">
    <property type="nucleotide sequence ID" value="NM_001093127.1"/>
</dbReference>
<dbReference type="GlyCosmos" id="Q6DF87">
    <property type="glycosylation" value="1 site, No reported glycans"/>
</dbReference>
<dbReference type="DNASU" id="446431"/>
<dbReference type="GeneID" id="446431"/>
<dbReference type="KEGG" id="xla:446431"/>
<dbReference type="AGR" id="Xenbase:XB-GENE-6256227"/>
<dbReference type="CTD" id="446431"/>
<dbReference type="Xenbase" id="XB-GENE-6256227">
    <property type="gene designation" value="tmem170a.S"/>
</dbReference>
<dbReference type="OMA" id="GRFMSVG"/>
<dbReference type="OrthoDB" id="13807at2759"/>
<dbReference type="Proteomes" id="UP000186698">
    <property type="component" value="Chromosome 4S"/>
</dbReference>
<dbReference type="Bgee" id="446431">
    <property type="expression patterns" value="Expressed in egg cell and 19 other cell types or tissues"/>
</dbReference>
<dbReference type="GO" id="GO:0005789">
    <property type="term" value="C:endoplasmic reticulum membrane"/>
    <property type="evidence" value="ECO:0000250"/>
    <property type="project" value="UniProtKB"/>
</dbReference>
<dbReference type="GO" id="GO:0005635">
    <property type="term" value="C:nuclear envelope"/>
    <property type="evidence" value="ECO:0000250"/>
    <property type="project" value="UniProtKB"/>
</dbReference>
<dbReference type="GO" id="GO:0071786">
    <property type="term" value="P:endoplasmic reticulum tubular network organization"/>
    <property type="evidence" value="ECO:0000250"/>
    <property type="project" value="UniProtKB"/>
</dbReference>
<dbReference type="InterPro" id="IPR019334">
    <property type="entry name" value="Transmembrane_pr_170"/>
</dbReference>
<dbReference type="PANTHER" id="PTHR22779">
    <property type="entry name" value="SD17342P"/>
    <property type="match status" value="1"/>
</dbReference>
<dbReference type="PANTHER" id="PTHR22779:SF2">
    <property type="entry name" value="TRANSMEMBRANE PROTEIN 170A"/>
    <property type="match status" value="1"/>
</dbReference>
<dbReference type="Pfam" id="PF10190">
    <property type="entry name" value="Tmemb_170"/>
    <property type="match status" value="1"/>
</dbReference>
<feature type="chain" id="PRO_0000291763" description="Transmembrane protein 170A">
    <location>
        <begin position="1"/>
        <end position="142"/>
    </location>
</feature>
<feature type="topological domain" description="Lumenal" evidence="1">
    <location>
        <begin position="1"/>
        <end position="48"/>
    </location>
</feature>
<feature type="transmembrane region" description="Helical" evidence="2">
    <location>
        <begin position="49"/>
        <end position="69"/>
    </location>
</feature>
<feature type="topological domain" description="Cytoplasmic" evidence="1">
    <location>
        <begin position="70"/>
        <end position="78"/>
    </location>
</feature>
<feature type="transmembrane region" description="Helical" evidence="2">
    <location>
        <begin position="79"/>
        <end position="99"/>
    </location>
</feature>
<feature type="topological domain" description="Lumenal" evidence="1">
    <location>
        <begin position="100"/>
        <end position="114"/>
    </location>
</feature>
<feature type="transmembrane region" description="Helical" evidence="2">
    <location>
        <begin position="115"/>
        <end position="135"/>
    </location>
</feature>
<feature type="topological domain" description="Cytoplasmic" evidence="1">
    <location>
        <begin position="136"/>
        <end position="142"/>
    </location>
</feature>
<feature type="glycosylation site" description="N-linked (GlcNAc...) asparagine" evidence="2">
    <location>
        <position position="29"/>
    </location>
</feature>
<keyword id="KW-0256">Endoplasmic reticulum</keyword>
<keyword id="KW-0325">Glycoprotein</keyword>
<keyword id="KW-0472">Membrane</keyword>
<keyword id="KW-0539">Nucleus</keyword>
<keyword id="KW-1185">Reference proteome</keyword>
<keyword id="KW-0812">Transmembrane</keyword>
<keyword id="KW-1133">Transmembrane helix</keyword>
<evidence type="ECO:0000250" key="1">
    <source>
        <dbReference type="UniProtKB" id="Q8WVE7"/>
    </source>
</evidence>
<evidence type="ECO:0000255" key="2"/>
<evidence type="ECO:0000305" key="3"/>
<comment type="function">
    <text evidence="1">May regulate membrane morphogenesis in the endoplasmic reticulum (ER) by promoting ER sheet formation at the expense of ER tubules.</text>
</comment>
<comment type="subcellular location">
    <subcellularLocation>
        <location evidence="1">Endoplasmic reticulum membrane</location>
        <topology evidence="2">Multi-pass membrane protein</topology>
    </subcellularLocation>
    <subcellularLocation>
        <location evidence="1">Nucleus envelope</location>
    </subcellularLocation>
</comment>
<comment type="similarity">
    <text evidence="3">Belongs to the TMEM170 family.</text>
</comment>
<protein>
    <recommendedName>
        <fullName>Transmembrane protein 170A</fullName>
    </recommendedName>
</protein>
<proteinExistence type="evidence at transcript level"/>
<organism>
    <name type="scientific">Xenopus laevis</name>
    <name type="common">African clawed frog</name>
    <dbReference type="NCBI Taxonomy" id="8355"/>
    <lineage>
        <taxon>Eukaryota</taxon>
        <taxon>Metazoa</taxon>
        <taxon>Chordata</taxon>
        <taxon>Craniata</taxon>
        <taxon>Vertebrata</taxon>
        <taxon>Euteleostomi</taxon>
        <taxon>Amphibia</taxon>
        <taxon>Batrachia</taxon>
        <taxon>Anura</taxon>
        <taxon>Pipoidea</taxon>
        <taxon>Pipidae</taxon>
        <taxon>Xenopodinae</taxon>
        <taxon>Xenopus</taxon>
        <taxon>Xenopus</taxon>
    </lineage>
</organism>
<name>T170A_XENLA</name>